<sequence>MKITKYRTKKSLGQCFILDPAIAEKIVSYAGCLEQYNVIEVGPGLGIMTQSILNKEVRRLTAIEKDRRLSNIHSKLKEAHAEYDCIFEDILDVNIEQLLSQSPLKMISNLPYNISVILLLKLLPYIHRFEKLILMFQKEVADRIVAQPNTKSYSILSILVQLLCDVRKVEDFPPEIFSPSPKVYSSVIEITPLLSPRFSVDNSYFAQVLKKLFHCRRKTIRNSLKSCIKDADALFIGCNIDPNARAESLTIEQLCSLTNALKARNINII</sequence>
<keyword id="KW-0963">Cytoplasm</keyword>
<keyword id="KW-0489">Methyltransferase</keyword>
<keyword id="KW-0694">RNA-binding</keyword>
<keyword id="KW-0698">rRNA processing</keyword>
<keyword id="KW-0949">S-adenosyl-L-methionine</keyword>
<keyword id="KW-0808">Transferase</keyword>
<comment type="function">
    <text evidence="1">Specifically dimethylates two adjacent adenosines (A1518 and A1519) in the loop of a conserved hairpin near the 3'-end of 16S rRNA in the 30S particle. May play a critical role in biogenesis of 30S subunits.</text>
</comment>
<comment type="catalytic activity">
    <reaction evidence="1">
        <text>adenosine(1518)/adenosine(1519) in 16S rRNA + 4 S-adenosyl-L-methionine = N(6)-dimethyladenosine(1518)/N(6)-dimethyladenosine(1519) in 16S rRNA + 4 S-adenosyl-L-homocysteine + 4 H(+)</text>
        <dbReference type="Rhea" id="RHEA:19609"/>
        <dbReference type="Rhea" id="RHEA-COMP:10232"/>
        <dbReference type="Rhea" id="RHEA-COMP:10233"/>
        <dbReference type="ChEBI" id="CHEBI:15378"/>
        <dbReference type="ChEBI" id="CHEBI:57856"/>
        <dbReference type="ChEBI" id="CHEBI:59789"/>
        <dbReference type="ChEBI" id="CHEBI:74411"/>
        <dbReference type="ChEBI" id="CHEBI:74493"/>
        <dbReference type="EC" id="2.1.1.182"/>
    </reaction>
</comment>
<comment type="subcellular location">
    <subcellularLocation>
        <location evidence="1">Cytoplasm</location>
    </subcellularLocation>
</comment>
<comment type="similarity">
    <text evidence="1">Belongs to the class I-like SAM-binding methyltransferase superfamily. rRNA adenine N(6)-methyltransferase family. RsmA subfamily.</text>
</comment>
<name>RSMA_ANAPZ</name>
<evidence type="ECO:0000255" key="1">
    <source>
        <dbReference type="HAMAP-Rule" id="MF_00607"/>
    </source>
</evidence>
<dbReference type="EC" id="2.1.1.182" evidence="1"/>
<dbReference type="EMBL" id="CP000235">
    <property type="protein sequence ID" value="ABD43291.1"/>
    <property type="molecule type" value="Genomic_DNA"/>
</dbReference>
<dbReference type="RefSeq" id="WP_011450731.1">
    <property type="nucleotide sequence ID" value="NC_007797.1"/>
</dbReference>
<dbReference type="SMR" id="Q2GK91"/>
<dbReference type="STRING" id="212042.APH_0622"/>
<dbReference type="PaxDb" id="212042-APH_0622"/>
<dbReference type="EnsemblBacteria" id="ABD43291">
    <property type="protein sequence ID" value="ABD43291"/>
    <property type="gene ID" value="APH_0622"/>
</dbReference>
<dbReference type="GeneID" id="92748287"/>
<dbReference type="KEGG" id="aph:APH_0622"/>
<dbReference type="eggNOG" id="COG0030">
    <property type="taxonomic scope" value="Bacteria"/>
</dbReference>
<dbReference type="HOGENOM" id="CLU_041220_0_1_5"/>
<dbReference type="Proteomes" id="UP000001943">
    <property type="component" value="Chromosome"/>
</dbReference>
<dbReference type="GO" id="GO:0005737">
    <property type="term" value="C:cytoplasm"/>
    <property type="evidence" value="ECO:0007669"/>
    <property type="project" value="UniProtKB-SubCell"/>
</dbReference>
<dbReference type="GO" id="GO:0052908">
    <property type="term" value="F:16S rRNA (adenine(1518)-N(6)/adenine(1519)-N(6))-dimethyltransferase activity"/>
    <property type="evidence" value="ECO:0007669"/>
    <property type="project" value="UniProtKB-EC"/>
</dbReference>
<dbReference type="GO" id="GO:0003723">
    <property type="term" value="F:RNA binding"/>
    <property type="evidence" value="ECO:0007669"/>
    <property type="project" value="UniProtKB-KW"/>
</dbReference>
<dbReference type="CDD" id="cd02440">
    <property type="entry name" value="AdoMet_MTases"/>
    <property type="match status" value="1"/>
</dbReference>
<dbReference type="FunFam" id="1.10.8.100:FF:000001">
    <property type="entry name" value="Ribosomal RNA small subunit methyltransferase A"/>
    <property type="match status" value="1"/>
</dbReference>
<dbReference type="Gene3D" id="1.10.8.100">
    <property type="entry name" value="Ribosomal RNA adenine dimethylase-like, domain 2"/>
    <property type="match status" value="1"/>
</dbReference>
<dbReference type="Gene3D" id="3.40.50.150">
    <property type="entry name" value="Vaccinia Virus protein VP39"/>
    <property type="match status" value="1"/>
</dbReference>
<dbReference type="HAMAP" id="MF_00607">
    <property type="entry name" value="16SrRNA_methyltr_A"/>
    <property type="match status" value="1"/>
</dbReference>
<dbReference type="InterPro" id="IPR001737">
    <property type="entry name" value="KsgA/Erm"/>
</dbReference>
<dbReference type="InterPro" id="IPR023165">
    <property type="entry name" value="rRNA_Ade_diMease-like_C"/>
</dbReference>
<dbReference type="InterPro" id="IPR020596">
    <property type="entry name" value="rRNA_Ade_Mease_Trfase_CS"/>
</dbReference>
<dbReference type="InterPro" id="IPR020598">
    <property type="entry name" value="rRNA_Ade_methylase_Trfase_N"/>
</dbReference>
<dbReference type="InterPro" id="IPR011530">
    <property type="entry name" value="rRNA_adenine_dimethylase"/>
</dbReference>
<dbReference type="InterPro" id="IPR029063">
    <property type="entry name" value="SAM-dependent_MTases_sf"/>
</dbReference>
<dbReference type="NCBIfam" id="TIGR00755">
    <property type="entry name" value="ksgA"/>
    <property type="match status" value="1"/>
</dbReference>
<dbReference type="PANTHER" id="PTHR11727">
    <property type="entry name" value="DIMETHYLADENOSINE TRANSFERASE"/>
    <property type="match status" value="1"/>
</dbReference>
<dbReference type="PANTHER" id="PTHR11727:SF17">
    <property type="entry name" value="DIMETHYLADENOSINE TRANSFERASE 1, MITOCHONDRIAL"/>
    <property type="match status" value="1"/>
</dbReference>
<dbReference type="Pfam" id="PF00398">
    <property type="entry name" value="RrnaAD"/>
    <property type="match status" value="1"/>
</dbReference>
<dbReference type="SMART" id="SM00650">
    <property type="entry name" value="rADc"/>
    <property type="match status" value="1"/>
</dbReference>
<dbReference type="SUPFAM" id="SSF53335">
    <property type="entry name" value="S-adenosyl-L-methionine-dependent methyltransferases"/>
    <property type="match status" value="1"/>
</dbReference>
<dbReference type="PROSITE" id="PS01131">
    <property type="entry name" value="RRNA_A_DIMETH"/>
    <property type="match status" value="1"/>
</dbReference>
<dbReference type="PROSITE" id="PS51689">
    <property type="entry name" value="SAM_RNA_A_N6_MT"/>
    <property type="match status" value="1"/>
</dbReference>
<reference key="1">
    <citation type="journal article" date="2006" name="PLoS Genet.">
        <title>Comparative genomics of emerging human ehrlichiosis agents.</title>
        <authorList>
            <person name="Dunning Hotopp J.C."/>
            <person name="Lin M."/>
            <person name="Madupu R."/>
            <person name="Crabtree J."/>
            <person name="Angiuoli S.V."/>
            <person name="Eisen J.A."/>
            <person name="Seshadri R."/>
            <person name="Ren Q."/>
            <person name="Wu M."/>
            <person name="Utterback T.R."/>
            <person name="Smith S."/>
            <person name="Lewis M."/>
            <person name="Khouri H."/>
            <person name="Zhang C."/>
            <person name="Niu H."/>
            <person name="Lin Q."/>
            <person name="Ohashi N."/>
            <person name="Zhi N."/>
            <person name="Nelson W.C."/>
            <person name="Brinkac L.M."/>
            <person name="Dodson R.J."/>
            <person name="Rosovitz M.J."/>
            <person name="Sundaram J.P."/>
            <person name="Daugherty S.C."/>
            <person name="Davidsen T."/>
            <person name="Durkin A.S."/>
            <person name="Gwinn M.L."/>
            <person name="Haft D.H."/>
            <person name="Selengut J.D."/>
            <person name="Sullivan S.A."/>
            <person name="Zafar N."/>
            <person name="Zhou L."/>
            <person name="Benahmed F."/>
            <person name="Forberger H."/>
            <person name="Halpin R."/>
            <person name="Mulligan S."/>
            <person name="Robinson J."/>
            <person name="White O."/>
            <person name="Rikihisa Y."/>
            <person name="Tettelin H."/>
        </authorList>
    </citation>
    <scope>NUCLEOTIDE SEQUENCE [LARGE SCALE GENOMIC DNA]</scope>
    <source>
        <strain>HZ</strain>
    </source>
</reference>
<gene>
    <name evidence="1" type="primary">rsmA</name>
    <name evidence="1" type="synonym">ksgA</name>
    <name type="ordered locus">APH_0622</name>
</gene>
<organism>
    <name type="scientific">Anaplasma phagocytophilum (strain HZ)</name>
    <dbReference type="NCBI Taxonomy" id="212042"/>
    <lineage>
        <taxon>Bacteria</taxon>
        <taxon>Pseudomonadati</taxon>
        <taxon>Pseudomonadota</taxon>
        <taxon>Alphaproteobacteria</taxon>
        <taxon>Rickettsiales</taxon>
        <taxon>Anaplasmataceae</taxon>
        <taxon>Anaplasma</taxon>
        <taxon>phagocytophilum group</taxon>
    </lineage>
</organism>
<proteinExistence type="inferred from homology"/>
<protein>
    <recommendedName>
        <fullName evidence="1">Ribosomal RNA small subunit methyltransferase A</fullName>
        <ecNumber evidence="1">2.1.1.182</ecNumber>
    </recommendedName>
    <alternativeName>
        <fullName evidence="1">16S rRNA (adenine(1518)-N(6)/adenine(1519)-N(6))-dimethyltransferase</fullName>
    </alternativeName>
    <alternativeName>
        <fullName evidence="1">16S rRNA dimethyladenosine transferase</fullName>
    </alternativeName>
    <alternativeName>
        <fullName evidence="1">16S rRNA dimethylase</fullName>
    </alternativeName>
    <alternativeName>
        <fullName evidence="1">S-adenosylmethionine-6-N', N'-adenosyl(rRNA) dimethyltransferase</fullName>
    </alternativeName>
</protein>
<accession>Q2GK91</accession>
<feature type="chain" id="PRO_0000271899" description="Ribosomal RNA small subunit methyltransferase A">
    <location>
        <begin position="1"/>
        <end position="269"/>
    </location>
</feature>
<feature type="binding site" evidence="1">
    <location>
        <position position="17"/>
    </location>
    <ligand>
        <name>S-adenosyl-L-methionine</name>
        <dbReference type="ChEBI" id="CHEBI:59789"/>
    </ligand>
</feature>
<feature type="binding site" evidence="1">
    <location>
        <position position="42"/>
    </location>
    <ligand>
        <name>S-adenosyl-L-methionine</name>
        <dbReference type="ChEBI" id="CHEBI:59789"/>
    </ligand>
</feature>
<feature type="binding site" evidence="1">
    <location>
        <position position="64"/>
    </location>
    <ligand>
        <name>S-adenosyl-L-methionine</name>
        <dbReference type="ChEBI" id="CHEBI:59789"/>
    </ligand>
</feature>
<feature type="binding site" evidence="1">
    <location>
        <position position="89"/>
    </location>
    <ligand>
        <name>S-adenosyl-L-methionine</name>
        <dbReference type="ChEBI" id="CHEBI:59789"/>
    </ligand>
</feature>
<feature type="binding site" evidence="1">
    <location>
        <position position="109"/>
    </location>
    <ligand>
        <name>S-adenosyl-L-methionine</name>
        <dbReference type="ChEBI" id="CHEBI:59789"/>
    </ligand>
</feature>